<reference key="1">
    <citation type="journal article" date="2002" name="Nucleic Acids Res.">
        <title>Genome sequence of Shigella flexneri 2a: insights into pathogenicity through comparison with genomes of Escherichia coli K12 and O157.</title>
        <authorList>
            <person name="Jin Q."/>
            <person name="Yuan Z."/>
            <person name="Xu J."/>
            <person name="Wang Y."/>
            <person name="Shen Y."/>
            <person name="Lu W."/>
            <person name="Wang J."/>
            <person name="Liu H."/>
            <person name="Yang J."/>
            <person name="Yang F."/>
            <person name="Zhang X."/>
            <person name="Zhang J."/>
            <person name="Yang G."/>
            <person name="Wu H."/>
            <person name="Qu D."/>
            <person name="Dong J."/>
            <person name="Sun L."/>
            <person name="Xue Y."/>
            <person name="Zhao A."/>
            <person name="Gao Y."/>
            <person name="Zhu J."/>
            <person name="Kan B."/>
            <person name="Ding K."/>
            <person name="Chen S."/>
            <person name="Cheng H."/>
            <person name="Yao Z."/>
            <person name="He B."/>
            <person name="Chen R."/>
            <person name="Ma D."/>
            <person name="Qiang B."/>
            <person name="Wen Y."/>
            <person name="Hou Y."/>
            <person name="Yu J."/>
        </authorList>
    </citation>
    <scope>NUCLEOTIDE SEQUENCE [LARGE SCALE GENOMIC DNA]</scope>
    <source>
        <strain>301 / Serotype 2a</strain>
    </source>
</reference>
<reference key="2">
    <citation type="journal article" date="2003" name="Infect. Immun.">
        <title>Complete genome sequence and comparative genomics of Shigella flexneri serotype 2a strain 2457T.</title>
        <authorList>
            <person name="Wei J."/>
            <person name="Goldberg M.B."/>
            <person name="Burland V."/>
            <person name="Venkatesan M.M."/>
            <person name="Deng W."/>
            <person name="Fournier G."/>
            <person name="Mayhew G.F."/>
            <person name="Plunkett G. III"/>
            <person name="Rose D.J."/>
            <person name="Darling A."/>
            <person name="Mau B."/>
            <person name="Perna N.T."/>
            <person name="Payne S.M."/>
            <person name="Runyen-Janecky L.J."/>
            <person name="Zhou S."/>
            <person name="Schwartz D.C."/>
            <person name="Blattner F.R."/>
        </authorList>
    </citation>
    <scope>NUCLEOTIDE SEQUENCE [LARGE SCALE GENOMIC DNA]</scope>
    <source>
        <strain>ATCC 700930 / 2457T / Serotype 2a</strain>
    </source>
</reference>
<organism>
    <name type="scientific">Shigella flexneri</name>
    <dbReference type="NCBI Taxonomy" id="623"/>
    <lineage>
        <taxon>Bacteria</taxon>
        <taxon>Pseudomonadati</taxon>
        <taxon>Pseudomonadota</taxon>
        <taxon>Gammaproteobacteria</taxon>
        <taxon>Enterobacterales</taxon>
        <taxon>Enterobacteriaceae</taxon>
        <taxon>Shigella</taxon>
    </lineage>
</organism>
<accession>P64473</accession>
<accession>P76184</accession>
<keyword id="KW-1003">Cell membrane</keyword>
<keyword id="KW-0472">Membrane</keyword>
<keyword id="KW-1185">Reference proteome</keyword>
<keyword id="KW-0812">Transmembrane</keyword>
<keyword id="KW-1133">Transmembrane helix</keyword>
<proteinExistence type="predicted"/>
<dbReference type="EMBL" id="AE005674">
    <property type="protein sequence ID" value="AAN43252.1"/>
    <property type="molecule type" value="Genomic_DNA"/>
</dbReference>
<dbReference type="EMBL" id="AE014073">
    <property type="protein sequence ID" value="AAP17138.1"/>
    <property type="molecule type" value="Genomic_DNA"/>
</dbReference>
<dbReference type="RefSeq" id="NP_707545.1">
    <property type="nucleotide sequence ID" value="NC_004337.2"/>
</dbReference>
<dbReference type="RefSeq" id="WP_000670998.1">
    <property type="nucleotide sequence ID" value="NZ_WPGW01000025.1"/>
</dbReference>
<dbReference type="SMR" id="P64473"/>
<dbReference type="STRING" id="198214.SF1670"/>
<dbReference type="PaxDb" id="198214-SF1670"/>
<dbReference type="GeneID" id="1024877"/>
<dbReference type="KEGG" id="sfl:SF1670"/>
<dbReference type="KEGG" id="sfx:S1802"/>
<dbReference type="PATRIC" id="fig|198214.7.peg.1968"/>
<dbReference type="HOGENOM" id="CLU_178515_0_0_6"/>
<dbReference type="Proteomes" id="UP000001006">
    <property type="component" value="Chromosome"/>
</dbReference>
<dbReference type="Proteomes" id="UP000002673">
    <property type="component" value="Chromosome"/>
</dbReference>
<dbReference type="GO" id="GO:0005886">
    <property type="term" value="C:plasma membrane"/>
    <property type="evidence" value="ECO:0007669"/>
    <property type="project" value="UniProtKB-SubCell"/>
</dbReference>
<dbReference type="InterPro" id="IPR012451">
    <property type="entry name" value="DUF1656"/>
</dbReference>
<dbReference type="Pfam" id="PF07869">
    <property type="entry name" value="DUF1656"/>
    <property type="match status" value="1"/>
</dbReference>
<name>YDHI_SHIFL</name>
<comment type="subcellular location">
    <subcellularLocation>
        <location evidence="2">Cell membrane</location>
        <topology evidence="2">Multi-pass membrane protein</topology>
    </subcellularLocation>
</comment>
<sequence length="78" mass="8891">MKFMLNATGLPLQDLVFGASVYFPPFFKAFAFGFVIWLVVHRLLRGWIYAGDIWHPLLMDLSLFAICVCLALAILIAW</sequence>
<feature type="chain" id="PRO_0000168977" description="Uncharacterized protein YdhI">
    <location>
        <begin position="1"/>
        <end position="78"/>
    </location>
</feature>
<feature type="transmembrane region" description="Helical" evidence="1">
    <location>
        <begin position="20"/>
        <end position="40"/>
    </location>
</feature>
<feature type="transmembrane region" description="Helical" evidence="1">
    <location>
        <begin position="57"/>
        <end position="77"/>
    </location>
</feature>
<protein>
    <recommendedName>
        <fullName>Uncharacterized protein YdhI</fullName>
    </recommendedName>
</protein>
<evidence type="ECO:0000255" key="1"/>
<evidence type="ECO:0000305" key="2"/>
<gene>
    <name type="primary">ydhI</name>
    <name type="ordered locus">SF1670</name>
    <name type="ordered locus">S1802</name>
</gene>